<keyword id="KW-0067">ATP-binding</keyword>
<keyword id="KW-0418">Kinase</keyword>
<keyword id="KW-0460">Magnesium</keyword>
<keyword id="KW-0479">Metal-binding</keyword>
<keyword id="KW-0547">Nucleotide-binding</keyword>
<keyword id="KW-1185">Reference proteome</keyword>
<keyword id="KW-0711">Selenium</keyword>
<keyword id="KW-0712">Selenocysteine</keyword>
<keyword id="KW-0808">Transferase</keyword>
<proteinExistence type="inferred from homology"/>
<feature type="chain" id="PRO_1000130519" description="Selenide, water dikinase">
    <location>
        <begin position="1"/>
        <end position="343"/>
    </location>
</feature>
<feature type="active site" evidence="1">
    <location>
        <position position="16"/>
    </location>
</feature>
<feature type="binding site" description="in other chain" evidence="1">
    <location>
        <position position="19"/>
    </location>
    <ligand>
        <name>ATP</name>
        <dbReference type="ChEBI" id="CHEBI:30616"/>
        <note>ligand shared between dimeric partners</note>
    </ligand>
</feature>
<feature type="binding site" description="in other chain" evidence="1">
    <location>
        <begin position="46"/>
        <end position="48"/>
    </location>
    <ligand>
        <name>ATP</name>
        <dbReference type="ChEBI" id="CHEBI:30616"/>
        <note>ligand shared between dimeric partners</note>
    </ligand>
</feature>
<feature type="binding site" evidence="1">
    <location>
        <position position="49"/>
    </location>
    <ligand>
        <name>Mg(2+)</name>
        <dbReference type="ChEBI" id="CHEBI:18420"/>
    </ligand>
</feature>
<feature type="binding site" description="in other chain" evidence="1">
    <location>
        <position position="66"/>
    </location>
    <ligand>
        <name>ATP</name>
        <dbReference type="ChEBI" id="CHEBI:30616"/>
        <note>ligand shared between dimeric partners</note>
    </ligand>
</feature>
<feature type="binding site" description="in other chain" evidence="1">
    <location>
        <position position="89"/>
    </location>
    <ligand>
        <name>ATP</name>
        <dbReference type="ChEBI" id="CHEBI:30616"/>
        <note>ligand shared between dimeric partners</note>
    </ligand>
</feature>
<feature type="binding site" evidence="1">
    <location>
        <position position="89"/>
    </location>
    <ligand>
        <name>Mg(2+)</name>
        <dbReference type="ChEBI" id="CHEBI:18420"/>
    </ligand>
</feature>
<feature type="binding site" evidence="1">
    <location>
        <begin position="137"/>
        <end position="139"/>
    </location>
    <ligand>
        <name>ATP</name>
        <dbReference type="ChEBI" id="CHEBI:30616"/>
        <note>ligand shared between dimeric partners</note>
    </ligand>
</feature>
<feature type="binding site" evidence="1">
    <location>
        <position position="225"/>
    </location>
    <ligand>
        <name>Mg(2+)</name>
        <dbReference type="ChEBI" id="CHEBI:18420"/>
    </ligand>
</feature>
<feature type="site" description="Important for catalytic activity" evidence="1">
    <location>
        <position position="19"/>
    </location>
</feature>
<feature type="non-standard amino acid" description="Selenocysteine">
    <location>
        <position position="16"/>
    </location>
</feature>
<name>SELD_CITBB</name>
<comment type="function">
    <text evidence="1">Synthesizes selenophosphate from selenide and ATP.</text>
</comment>
<comment type="catalytic activity">
    <reaction evidence="1">
        <text>hydrogenselenide + ATP + H2O = selenophosphate + AMP + phosphate + 2 H(+)</text>
        <dbReference type="Rhea" id="RHEA:18737"/>
        <dbReference type="ChEBI" id="CHEBI:15377"/>
        <dbReference type="ChEBI" id="CHEBI:15378"/>
        <dbReference type="ChEBI" id="CHEBI:16144"/>
        <dbReference type="ChEBI" id="CHEBI:29317"/>
        <dbReference type="ChEBI" id="CHEBI:30616"/>
        <dbReference type="ChEBI" id="CHEBI:43474"/>
        <dbReference type="ChEBI" id="CHEBI:456215"/>
        <dbReference type="EC" id="2.7.9.3"/>
    </reaction>
</comment>
<comment type="cofactor">
    <cofactor evidence="1">
        <name>Mg(2+)</name>
        <dbReference type="ChEBI" id="CHEBI:18420"/>
    </cofactor>
    <text evidence="1">Binds 1 Mg(2+) ion per monomer.</text>
</comment>
<comment type="subunit">
    <text evidence="1">Homodimer.</text>
</comment>
<comment type="similarity">
    <text evidence="1">Belongs to the selenophosphate synthase 1 family. Class I subfamily.</text>
</comment>
<organism>
    <name type="scientific">Citrifermentans bemidjiense (strain ATCC BAA-1014 / DSM 16622 / JCM 12645 / Bem)</name>
    <name type="common">Geobacter bemidjiensis</name>
    <dbReference type="NCBI Taxonomy" id="404380"/>
    <lineage>
        <taxon>Bacteria</taxon>
        <taxon>Pseudomonadati</taxon>
        <taxon>Thermodesulfobacteriota</taxon>
        <taxon>Desulfuromonadia</taxon>
        <taxon>Geobacterales</taxon>
        <taxon>Geobacteraceae</taxon>
        <taxon>Citrifermentans</taxon>
    </lineage>
</organism>
<protein>
    <recommendedName>
        <fullName evidence="1">Selenide, water dikinase</fullName>
        <ecNumber evidence="1">2.7.9.3</ecNumber>
    </recommendedName>
    <alternativeName>
        <fullName evidence="1">Selenium donor protein</fullName>
    </alternativeName>
    <alternativeName>
        <fullName evidence="1">Selenophosphate synthase</fullName>
    </alternativeName>
</protein>
<evidence type="ECO:0000255" key="1">
    <source>
        <dbReference type="HAMAP-Rule" id="MF_00625"/>
    </source>
</evidence>
<accession>B5EBG1</accession>
<reference key="1">
    <citation type="submission" date="2008-07" db="EMBL/GenBank/DDBJ databases">
        <title>Complete sequence of Geobacter bemidjiensis BEM.</title>
        <authorList>
            <consortium name="US DOE Joint Genome Institute"/>
            <person name="Lucas S."/>
            <person name="Copeland A."/>
            <person name="Lapidus A."/>
            <person name="Glavina del Rio T."/>
            <person name="Dalin E."/>
            <person name="Tice H."/>
            <person name="Bruce D."/>
            <person name="Goodwin L."/>
            <person name="Pitluck S."/>
            <person name="Kiss H."/>
            <person name="Brettin T."/>
            <person name="Detter J.C."/>
            <person name="Han C."/>
            <person name="Kuske C.R."/>
            <person name="Schmutz J."/>
            <person name="Larimer F."/>
            <person name="Land M."/>
            <person name="Hauser L."/>
            <person name="Kyrpides N."/>
            <person name="Lykidis A."/>
            <person name="Lovley D."/>
            <person name="Richardson P."/>
        </authorList>
    </citation>
    <scope>NUCLEOTIDE SEQUENCE [LARGE SCALE GENOMIC DNA]</scope>
    <source>
        <strain>ATCC BAA-1014 / DSM 16622 / JCM 12645 / Bem</strain>
    </source>
</reference>
<dbReference type="EC" id="2.7.9.3" evidence="1"/>
<dbReference type="EMBL" id="CP001124">
    <property type="protein sequence ID" value="ACH40453.1"/>
    <property type="molecule type" value="Genomic_DNA"/>
</dbReference>
<dbReference type="RefSeq" id="WP_012531886.1">
    <property type="nucleotide sequence ID" value="NC_011146.1"/>
</dbReference>
<dbReference type="STRING" id="404380.Gbem_3460"/>
<dbReference type="KEGG" id="gbm:Gbem_3460"/>
<dbReference type="eggNOG" id="COG0709">
    <property type="taxonomic scope" value="Bacteria"/>
</dbReference>
<dbReference type="HOGENOM" id="CLU_032859_0_1_7"/>
<dbReference type="OrthoDB" id="9767928at2"/>
<dbReference type="Proteomes" id="UP000008825">
    <property type="component" value="Chromosome"/>
</dbReference>
<dbReference type="GO" id="GO:0005737">
    <property type="term" value="C:cytoplasm"/>
    <property type="evidence" value="ECO:0007669"/>
    <property type="project" value="TreeGrafter"/>
</dbReference>
<dbReference type="GO" id="GO:0005524">
    <property type="term" value="F:ATP binding"/>
    <property type="evidence" value="ECO:0007669"/>
    <property type="project" value="UniProtKB-UniRule"/>
</dbReference>
<dbReference type="GO" id="GO:0000287">
    <property type="term" value="F:magnesium ion binding"/>
    <property type="evidence" value="ECO:0007669"/>
    <property type="project" value="UniProtKB-UniRule"/>
</dbReference>
<dbReference type="GO" id="GO:0004756">
    <property type="term" value="F:selenide, water dikinase activity"/>
    <property type="evidence" value="ECO:0007669"/>
    <property type="project" value="UniProtKB-UniRule"/>
</dbReference>
<dbReference type="GO" id="GO:0016260">
    <property type="term" value="P:selenocysteine biosynthetic process"/>
    <property type="evidence" value="ECO:0007669"/>
    <property type="project" value="InterPro"/>
</dbReference>
<dbReference type="CDD" id="cd02195">
    <property type="entry name" value="SelD"/>
    <property type="match status" value="1"/>
</dbReference>
<dbReference type="FunFam" id="3.30.1330.10:FF:000003">
    <property type="entry name" value="Selenide, water dikinase"/>
    <property type="match status" value="1"/>
</dbReference>
<dbReference type="FunFam" id="3.90.650.10:FF:000004">
    <property type="entry name" value="Selenide, water dikinase"/>
    <property type="match status" value="1"/>
</dbReference>
<dbReference type="Gene3D" id="3.90.650.10">
    <property type="entry name" value="PurM-like C-terminal domain"/>
    <property type="match status" value="1"/>
</dbReference>
<dbReference type="Gene3D" id="3.30.1330.10">
    <property type="entry name" value="PurM-like, N-terminal domain"/>
    <property type="match status" value="1"/>
</dbReference>
<dbReference type="HAMAP" id="MF_00625">
    <property type="entry name" value="SelD"/>
    <property type="match status" value="1"/>
</dbReference>
<dbReference type="InterPro" id="IPR010918">
    <property type="entry name" value="PurM-like_C_dom"/>
</dbReference>
<dbReference type="InterPro" id="IPR036676">
    <property type="entry name" value="PurM-like_C_sf"/>
</dbReference>
<dbReference type="InterPro" id="IPR016188">
    <property type="entry name" value="PurM-like_N"/>
</dbReference>
<dbReference type="InterPro" id="IPR036921">
    <property type="entry name" value="PurM-like_N_sf"/>
</dbReference>
<dbReference type="InterPro" id="IPR023061">
    <property type="entry name" value="SelD_I"/>
</dbReference>
<dbReference type="InterPro" id="IPR004536">
    <property type="entry name" value="SPS/SelD"/>
</dbReference>
<dbReference type="NCBIfam" id="NF002098">
    <property type="entry name" value="PRK00943.1"/>
    <property type="match status" value="1"/>
</dbReference>
<dbReference type="NCBIfam" id="TIGR00476">
    <property type="entry name" value="selD"/>
    <property type="match status" value="1"/>
</dbReference>
<dbReference type="PANTHER" id="PTHR10256:SF0">
    <property type="entry name" value="INACTIVE SELENIDE, WATER DIKINASE-LIKE PROTEIN-RELATED"/>
    <property type="match status" value="1"/>
</dbReference>
<dbReference type="PANTHER" id="PTHR10256">
    <property type="entry name" value="SELENIDE, WATER DIKINASE"/>
    <property type="match status" value="1"/>
</dbReference>
<dbReference type="Pfam" id="PF00586">
    <property type="entry name" value="AIRS"/>
    <property type="match status" value="1"/>
</dbReference>
<dbReference type="Pfam" id="PF02769">
    <property type="entry name" value="AIRS_C"/>
    <property type="match status" value="1"/>
</dbReference>
<dbReference type="PIRSF" id="PIRSF036407">
    <property type="entry name" value="Selenphspht_syn"/>
    <property type="match status" value="1"/>
</dbReference>
<dbReference type="SUPFAM" id="SSF56042">
    <property type="entry name" value="PurM C-terminal domain-like"/>
    <property type="match status" value="1"/>
</dbReference>
<dbReference type="SUPFAM" id="SSF55326">
    <property type="entry name" value="PurM N-terminal domain-like"/>
    <property type="match status" value="1"/>
</dbReference>
<gene>
    <name evidence="1" type="primary">selD</name>
    <name type="ordered locus">Gbem_3460</name>
</gene>
<sequence length="343" mass="35609">MTDKVRLTTMVQAAGUAAKLGPAGLEEAIHDITRSDDPNLIVGVEGAEDAGIYRIGENLALVETTDIITPLVDDPFTFGRIAAANALSDVYAMGGRPVTAMNLAFFPACSLPTSVLAAILAGGSAALKEAGTCLVGGHTVEDDELKFGLAVTGLIDPARVVRNCTARPGDLIVITKPLGTGIISTAIKAEMIEPEVEAEATRWMTTLNAKAADLMVACRATAATDVTGFGFIGHACEMALGAKVSFKIELARVPVIPGVPALIDDGMVPAGCYRNRQHYEQHVSGNSGDPLLPLFDPQTSGGLLITFAPDDARTFLSRAGKEGLFAACIGEVEPAGGTPIVFV</sequence>